<comment type="function">
    <text evidence="1">This protein binds specifically to 23S rRNA; its binding is stimulated by other ribosomal proteins, e.g. L4, L17, and L20. It is important during the early stages of 50S assembly. It makes multiple contacts with different domains of the 23S rRNA in the assembled 50S subunit and ribosome (By similarity).</text>
</comment>
<comment type="function">
    <text evidence="1">The globular domain of the protein is located near the polypeptide exit tunnel on the outside of the subunit, while an extended beta-hairpin is found that lines the wall of the exit tunnel in the center of the 70S ribosome.</text>
</comment>
<comment type="subunit">
    <text evidence="1">Part of the 50S ribosomal subunit.</text>
</comment>
<comment type="similarity">
    <text evidence="1">Belongs to the universal ribosomal protein uL22 family.</text>
</comment>
<sequence length="110" mass="12566">MEAKAVSRFVRMSPRKVRLVADEIRGYAVNEALDILKFTNKRAIEPLTKVILSASANASVLNNKVDFNQLFIKKIYVDEGPIMKRFRPRARGRAARIRKRLSHITVVLSD</sequence>
<gene>
    <name evidence="1" type="primary">rplV</name>
    <name type="ordered locus">LIC_12868</name>
</gene>
<organism>
    <name type="scientific">Leptospira interrogans serogroup Icterohaemorrhagiae serovar copenhageni (strain Fiocruz L1-130)</name>
    <dbReference type="NCBI Taxonomy" id="267671"/>
    <lineage>
        <taxon>Bacteria</taxon>
        <taxon>Pseudomonadati</taxon>
        <taxon>Spirochaetota</taxon>
        <taxon>Spirochaetia</taxon>
        <taxon>Leptospirales</taxon>
        <taxon>Leptospiraceae</taxon>
        <taxon>Leptospira</taxon>
    </lineage>
</organism>
<name>RL22_LEPIC</name>
<dbReference type="EMBL" id="AE016823">
    <property type="protein sequence ID" value="AAS71421.1"/>
    <property type="molecule type" value="Genomic_DNA"/>
</dbReference>
<dbReference type="RefSeq" id="WP_000387530.1">
    <property type="nucleotide sequence ID" value="NC_005823.1"/>
</dbReference>
<dbReference type="SMR" id="Q72NG6"/>
<dbReference type="GeneID" id="61142742"/>
<dbReference type="KEGG" id="lic:LIC_12868"/>
<dbReference type="HOGENOM" id="CLU_083987_3_3_12"/>
<dbReference type="Proteomes" id="UP000007037">
    <property type="component" value="Chromosome I"/>
</dbReference>
<dbReference type="GO" id="GO:0022625">
    <property type="term" value="C:cytosolic large ribosomal subunit"/>
    <property type="evidence" value="ECO:0007669"/>
    <property type="project" value="TreeGrafter"/>
</dbReference>
<dbReference type="GO" id="GO:0019843">
    <property type="term" value="F:rRNA binding"/>
    <property type="evidence" value="ECO:0007669"/>
    <property type="project" value="UniProtKB-UniRule"/>
</dbReference>
<dbReference type="GO" id="GO:0003735">
    <property type="term" value="F:structural constituent of ribosome"/>
    <property type="evidence" value="ECO:0007669"/>
    <property type="project" value="InterPro"/>
</dbReference>
<dbReference type="GO" id="GO:0006412">
    <property type="term" value="P:translation"/>
    <property type="evidence" value="ECO:0007669"/>
    <property type="project" value="UniProtKB-UniRule"/>
</dbReference>
<dbReference type="CDD" id="cd00336">
    <property type="entry name" value="Ribosomal_L22"/>
    <property type="match status" value="1"/>
</dbReference>
<dbReference type="FunFam" id="3.90.470.10:FF:000011">
    <property type="entry name" value="50S ribosomal protein L22"/>
    <property type="match status" value="1"/>
</dbReference>
<dbReference type="Gene3D" id="3.90.470.10">
    <property type="entry name" value="Ribosomal protein L22/L17"/>
    <property type="match status" value="1"/>
</dbReference>
<dbReference type="HAMAP" id="MF_01331_B">
    <property type="entry name" value="Ribosomal_uL22_B"/>
    <property type="match status" value="1"/>
</dbReference>
<dbReference type="InterPro" id="IPR001063">
    <property type="entry name" value="Ribosomal_uL22"/>
</dbReference>
<dbReference type="InterPro" id="IPR005727">
    <property type="entry name" value="Ribosomal_uL22_bac/chlpt-type"/>
</dbReference>
<dbReference type="InterPro" id="IPR047867">
    <property type="entry name" value="Ribosomal_uL22_bac/org-type"/>
</dbReference>
<dbReference type="InterPro" id="IPR018260">
    <property type="entry name" value="Ribosomal_uL22_CS"/>
</dbReference>
<dbReference type="InterPro" id="IPR036394">
    <property type="entry name" value="Ribosomal_uL22_sf"/>
</dbReference>
<dbReference type="NCBIfam" id="TIGR01044">
    <property type="entry name" value="rplV_bact"/>
    <property type="match status" value="1"/>
</dbReference>
<dbReference type="PANTHER" id="PTHR13501">
    <property type="entry name" value="CHLOROPLAST 50S RIBOSOMAL PROTEIN L22-RELATED"/>
    <property type="match status" value="1"/>
</dbReference>
<dbReference type="PANTHER" id="PTHR13501:SF8">
    <property type="entry name" value="LARGE RIBOSOMAL SUBUNIT PROTEIN UL22M"/>
    <property type="match status" value="1"/>
</dbReference>
<dbReference type="Pfam" id="PF00237">
    <property type="entry name" value="Ribosomal_L22"/>
    <property type="match status" value="1"/>
</dbReference>
<dbReference type="SUPFAM" id="SSF54843">
    <property type="entry name" value="Ribosomal protein L22"/>
    <property type="match status" value="1"/>
</dbReference>
<dbReference type="PROSITE" id="PS00464">
    <property type="entry name" value="RIBOSOMAL_L22"/>
    <property type="match status" value="1"/>
</dbReference>
<evidence type="ECO:0000255" key="1">
    <source>
        <dbReference type="HAMAP-Rule" id="MF_01331"/>
    </source>
</evidence>
<evidence type="ECO:0000305" key="2"/>
<accession>Q72NG6</accession>
<proteinExistence type="inferred from homology"/>
<feature type="chain" id="PRO_0000125168" description="Large ribosomal subunit protein uL22">
    <location>
        <begin position="1"/>
        <end position="110"/>
    </location>
</feature>
<reference key="1">
    <citation type="journal article" date="2004" name="J. Bacteriol.">
        <title>Comparative genomics of two Leptospira interrogans serovars reveals novel insights into physiology and pathogenesis.</title>
        <authorList>
            <person name="Nascimento A.L.T.O."/>
            <person name="Ko A.I."/>
            <person name="Martins E.A.L."/>
            <person name="Monteiro-Vitorello C.B."/>
            <person name="Ho P.L."/>
            <person name="Haake D.A."/>
            <person name="Verjovski-Almeida S."/>
            <person name="Hartskeerl R.A."/>
            <person name="Marques M.V."/>
            <person name="Oliveira M.C."/>
            <person name="Menck C.F.M."/>
            <person name="Leite L.C.C."/>
            <person name="Carrer H."/>
            <person name="Coutinho L.L."/>
            <person name="Degrave W.M."/>
            <person name="Dellagostin O.A."/>
            <person name="El-Dorry H."/>
            <person name="Ferro E.S."/>
            <person name="Ferro M.I.T."/>
            <person name="Furlan L.R."/>
            <person name="Gamberini M."/>
            <person name="Giglioti E.A."/>
            <person name="Goes-Neto A."/>
            <person name="Goldman G.H."/>
            <person name="Goldman M.H.S."/>
            <person name="Harakava R."/>
            <person name="Jeronimo S.M.B."/>
            <person name="Junqueira-de-Azevedo I.L.M."/>
            <person name="Kimura E.T."/>
            <person name="Kuramae E.E."/>
            <person name="Lemos E.G.M."/>
            <person name="Lemos M.V.F."/>
            <person name="Marino C.L."/>
            <person name="Nunes L.R."/>
            <person name="de Oliveira R.C."/>
            <person name="Pereira G.G."/>
            <person name="Reis M.S."/>
            <person name="Schriefer A."/>
            <person name="Siqueira W.J."/>
            <person name="Sommer P."/>
            <person name="Tsai S.M."/>
            <person name="Simpson A.J.G."/>
            <person name="Ferro J.A."/>
            <person name="Camargo L.E.A."/>
            <person name="Kitajima J.P."/>
            <person name="Setubal J.C."/>
            <person name="Van Sluys M.A."/>
        </authorList>
    </citation>
    <scope>NUCLEOTIDE SEQUENCE [LARGE SCALE GENOMIC DNA]</scope>
    <source>
        <strain>Fiocruz L1-130</strain>
    </source>
</reference>
<protein>
    <recommendedName>
        <fullName evidence="1">Large ribosomal subunit protein uL22</fullName>
    </recommendedName>
    <alternativeName>
        <fullName evidence="2">50S ribosomal protein L22</fullName>
    </alternativeName>
</protein>
<keyword id="KW-0687">Ribonucleoprotein</keyword>
<keyword id="KW-0689">Ribosomal protein</keyword>
<keyword id="KW-0694">RNA-binding</keyword>
<keyword id="KW-0699">rRNA-binding</keyword>